<sequence length="109" mass="12594">MSAQPVDIQIFGRSLRVNCPPDQRDALNQAADDLNQRLQDLKERTRVTNTEQLVFIAALNISYELAQEKAKTRDYAASMEQRIRMLQQTIEQALLEQGRITEKTNQNFE</sequence>
<feature type="chain" id="PRO_0000169350" description="Cell division protein ZapA">
    <location>
        <begin position="1"/>
        <end position="109"/>
    </location>
</feature>
<feature type="coiled-coil region" evidence="1">
    <location>
        <begin position="21"/>
        <end position="99"/>
    </location>
</feature>
<feature type="sequence conflict" description="In Ref. 3." evidence="6" ref="3">
    <original>S</original>
    <variation>Y</variation>
    <location>
        <position position="14"/>
    </location>
</feature>
<feature type="strand" evidence="7">
    <location>
        <begin position="5"/>
        <end position="10"/>
    </location>
</feature>
<feature type="strand" evidence="7">
    <location>
        <begin position="13"/>
        <end position="18"/>
    </location>
</feature>
<feature type="helix" evidence="7">
    <location>
        <begin position="21"/>
        <end position="23"/>
    </location>
</feature>
<feature type="helix" evidence="7">
    <location>
        <begin position="24"/>
        <end position="45"/>
    </location>
</feature>
<feature type="helix" evidence="7">
    <location>
        <begin position="50"/>
        <end position="101"/>
    </location>
</feature>
<reference key="1">
    <citation type="journal article" date="1997" name="Science">
        <title>The complete genome sequence of Escherichia coli K-12.</title>
        <authorList>
            <person name="Blattner F.R."/>
            <person name="Plunkett G. III"/>
            <person name="Bloch C.A."/>
            <person name="Perna N.T."/>
            <person name="Burland V."/>
            <person name="Riley M."/>
            <person name="Collado-Vides J."/>
            <person name="Glasner J.D."/>
            <person name="Rode C.K."/>
            <person name="Mayhew G.F."/>
            <person name="Gregor J."/>
            <person name="Davis N.W."/>
            <person name="Kirkpatrick H.A."/>
            <person name="Goeden M.A."/>
            <person name="Rose D.J."/>
            <person name="Mau B."/>
            <person name="Shao Y."/>
        </authorList>
    </citation>
    <scope>NUCLEOTIDE SEQUENCE [LARGE SCALE GENOMIC DNA]</scope>
    <source>
        <strain>K12 / MG1655 / ATCC 47076</strain>
    </source>
</reference>
<reference key="2">
    <citation type="journal article" date="2006" name="Mol. Syst. Biol.">
        <title>Highly accurate genome sequences of Escherichia coli K-12 strains MG1655 and W3110.</title>
        <authorList>
            <person name="Hayashi K."/>
            <person name="Morooka N."/>
            <person name="Yamamoto Y."/>
            <person name="Fujita K."/>
            <person name="Isono K."/>
            <person name="Choi S."/>
            <person name="Ohtsubo E."/>
            <person name="Baba T."/>
            <person name="Wanner B.L."/>
            <person name="Mori H."/>
            <person name="Horiuchi T."/>
        </authorList>
    </citation>
    <scope>NUCLEOTIDE SEQUENCE [LARGE SCALE GENOMIC DNA]</scope>
    <source>
        <strain>K12 / W3110 / ATCC 27325 / DSM 5911</strain>
    </source>
</reference>
<reference key="3">
    <citation type="journal article" date="1992" name="J. Bacteriol.">
        <title>Isolation and characterization of a light-sensitive mutant of Escherichia coli K-12 with a mutation in a gene that is required for the biosynthesis of ubiquinone.</title>
        <authorList>
            <person name="Nakahigashi K."/>
            <person name="Miyamoto K."/>
            <person name="Nishimura K."/>
            <person name="Inokuchi H."/>
        </authorList>
    </citation>
    <scope>NUCLEOTIDE SEQUENCE [GENOMIC DNA] OF 1-105</scope>
    <source>
        <strain>ATCC 33694 / HB101</strain>
    </source>
</reference>
<reference key="4">
    <citation type="journal article" date="1985" name="J. Bacteriol.">
        <title>Escherichia coli 6S RNA gene is part of a dual-function transcription unit.</title>
        <authorList>
            <person name="Hsu L.M."/>
            <person name="Zagorski J."/>
            <person name="Wang Z."/>
            <person name="Fournier M.J."/>
        </authorList>
    </citation>
    <scope>NUCLEOTIDE SEQUENCE [GENOMIC DNA] OF 89-109</scope>
</reference>
<reference key="5">
    <citation type="journal article" date="1995" name="Nucleic Acids Res.">
        <title>Detection of new genes in a bacterial genome using Markov models for three gene classes.</title>
        <authorList>
            <person name="Borodovsky M."/>
            <person name="McIninch J."/>
            <person name="Koonin E.V."/>
            <person name="Rudd K.E."/>
            <person name="Medigue C."/>
            <person name="Danchin A."/>
        </authorList>
    </citation>
    <scope>IDENTIFICATION</scope>
</reference>
<reference key="6">
    <citation type="journal article" date="2002" name="Genes Dev.">
        <title>A widely conserved bacterial cell division protein that promotes assembly of the tubulin-like protein FtsZ.</title>
        <authorList>
            <person name="Gueiros-Filho F.J."/>
            <person name="Losick R."/>
        </authorList>
    </citation>
    <scope>SUBCELLULAR LOCATION</scope>
</reference>
<reference key="7">
    <citation type="journal article" date="2004" name="J. Bacteriol.">
        <title>ZipA is required for targeting of DMinC/DicB, but not DMinC/MinD, complexes to septal ring assemblies in Escherichia coli.</title>
        <authorList>
            <person name="Johnson J.E."/>
            <person name="Lackner L.L."/>
            <person name="Hale C.A."/>
            <person name="de Boer P.A.J."/>
        </authorList>
    </citation>
    <scope>ROLE IN THE RECRUITMENT OF OTHER CELL DIVISION PROTEINS</scope>
</reference>
<reference key="8">
    <citation type="journal article" date="2004" name="J. Bacteriol.">
        <title>Assembly dynamics of FtsZ rings in Bacillus subtilis and Escherichia coli and effects of FtsZ-regulating proteins.</title>
        <authorList>
            <person name="Anderson D.E."/>
            <person name="Gueiros-Filho F.J."/>
            <person name="Erickson H.P."/>
        </authorList>
    </citation>
    <scope>INTERACTION WITH FTSZ</scope>
</reference>
<reference key="9">
    <citation type="journal article" date="2005" name="Genes Dev.">
        <title>Premature targeting of a cell division protein to midcell allows dissection of divisome assembly in Escherichia coli.</title>
        <authorList>
            <person name="Goehring N.W."/>
            <person name="Gueiros-Filho F."/>
            <person name="Beckwith J."/>
        </authorList>
    </citation>
    <scope>COMPONENT OF THE SEPTAL RECRUITMENT PATHWAY</scope>
</reference>
<reference key="10">
    <citation type="journal article" date="2005" name="Mol. Microbiol.">
        <title>Maturation of the Escherichia coli divisome occurs in two steps.</title>
        <authorList>
            <person name="Aarsman M.E.G."/>
            <person name="Piette A."/>
            <person name="Fraipont C."/>
            <person name="Vinkenvleugel T.M.F."/>
            <person name="Nguyen-Disteche M."/>
            <person name="den Blaauwen T."/>
        </authorList>
    </citation>
    <scope>TIMING OF RECRUITMENT DURING CELL DIVISION</scope>
</reference>
<reference key="11">
    <citation type="journal article" date="2006" name="Mol. Microbiol.">
        <title>Premature targeting of cell division proteins to midcell reveals hierarchies of protein interactions involved in divisome assembly.</title>
        <authorList>
            <person name="Goehring N.W."/>
            <person name="Gonzalez M.D."/>
            <person name="Beckwith J."/>
        </authorList>
    </citation>
    <scope>ASSEMBLY OF CELL DIVISION COMPONENTS</scope>
</reference>
<reference key="12">
    <citation type="journal article" date="2007" name="J. Mol. Biol.">
        <title>FtsZ polymer-bundling by the Escherichia coli ZapA orthologue, YgfE, involves a conformational change in bound GTP.</title>
        <authorList>
            <person name="Small E."/>
            <person name="Marrington R."/>
            <person name="Rodger A."/>
            <person name="Scott D.J."/>
            <person name="Sloan K."/>
            <person name="Roper D."/>
            <person name="Dafforn T.R."/>
            <person name="Addinall S.G."/>
        </authorList>
    </citation>
    <scope>INHIBITION OF FTSZ GTPASE ACTIVITY</scope>
    <scope>INTERACTION WITH FTSZ</scope>
    <scope>SUBUNIT</scope>
    <source>
        <strain>K12 / MG1655 / ATCC 47076</strain>
    </source>
</reference>
<reference key="13">
    <citation type="journal article" date="2005" name="Acta Crystallogr. F">
        <title>Expression, purification and crystallization of the cell-division protein YgfE from Escherichia coli.</title>
        <authorList>
            <person name="Addinall S.G."/>
            <person name="Johnson K.A."/>
            <person name="Dafforn T."/>
            <person name="Smith C."/>
            <person name="Rodger A."/>
            <person name="Gomez R.P."/>
            <person name="Sloan K."/>
            <person name="Blewett A."/>
            <person name="Scott D.J."/>
            <person name="Roper D.I."/>
        </authorList>
    </citation>
    <scope>CRYSTALLIZATION</scope>
    <source>
        <strain>K12 / MG1655 / ATCC 47076</strain>
    </source>
</reference>
<comment type="function">
    <text evidence="3">Activator of cell division through the inhibition of FtsZ GTPase activity, therefore promoting FtsZ assembly into bundles of protofilaments necessary for the formation of the division Z ring. It is recruited early at mid-cell but it is not essential for cell division.</text>
</comment>
<comment type="subunit">
    <text evidence="4 5">Homodimer. Interacts with FtsZ.</text>
</comment>
<comment type="interaction">
    <interactant intactId="EBI-1119901">
        <id>P0ADS2</id>
    </interactant>
    <interactant intactId="EBI-1134093">
        <id>P0AF36</id>
        <label>zapB</label>
    </interactant>
    <organismsDiffer>false</organismsDiffer>
    <experiments>4</experiments>
</comment>
<comment type="subcellular location">
    <subcellularLocation>
        <location evidence="2">Cytoplasm</location>
    </subcellularLocation>
    <text>Localizes at mid-cell.</text>
</comment>
<comment type="similarity">
    <text evidence="6">Belongs to the ZapA family. Type 1 subfamily.</text>
</comment>
<accession>P0ADS2</accession>
<accession>P45580</accession>
<accession>Q2M9T1</accession>
<gene>
    <name type="primary">zapA</name>
    <name type="synonym">ygfE</name>
    <name type="ordered locus">b2910</name>
    <name type="ordered locus">JW2878</name>
</gene>
<dbReference type="EMBL" id="U28377">
    <property type="protein sequence ID" value="AAA69078.1"/>
    <property type="molecule type" value="Genomic_DNA"/>
</dbReference>
<dbReference type="EMBL" id="U00096">
    <property type="protein sequence ID" value="AAC75948.1"/>
    <property type="molecule type" value="Genomic_DNA"/>
</dbReference>
<dbReference type="EMBL" id="AP009048">
    <property type="protein sequence ID" value="BAE76975.1"/>
    <property type="molecule type" value="Genomic_DNA"/>
</dbReference>
<dbReference type="EMBL" id="D90281">
    <property type="status" value="NOT_ANNOTATED_CDS"/>
    <property type="molecule type" value="Genomic_DNA"/>
</dbReference>
<dbReference type="EMBL" id="M12965">
    <property type="status" value="NOT_ANNOTATED_CDS"/>
    <property type="molecule type" value="Genomic_DNA"/>
</dbReference>
<dbReference type="PIR" id="F65075">
    <property type="entry name" value="F65075"/>
</dbReference>
<dbReference type="RefSeq" id="NP_417386.1">
    <property type="nucleotide sequence ID" value="NC_000913.3"/>
</dbReference>
<dbReference type="RefSeq" id="WP_001276008.1">
    <property type="nucleotide sequence ID" value="NZ_STEB01000001.1"/>
</dbReference>
<dbReference type="PDB" id="4P1M">
    <property type="method" value="X-ray"/>
    <property type="resolution" value="1.95 A"/>
    <property type="chains" value="A/B=1-109"/>
</dbReference>
<dbReference type="PDBsum" id="4P1M"/>
<dbReference type="SMR" id="P0ADS2"/>
<dbReference type="BioGRID" id="4262169">
    <property type="interactions" value="360"/>
</dbReference>
<dbReference type="FunCoup" id="P0ADS2">
    <property type="interactions" value="87"/>
</dbReference>
<dbReference type="IntAct" id="P0ADS2">
    <property type="interactions" value="8"/>
</dbReference>
<dbReference type="STRING" id="511145.b2910"/>
<dbReference type="jPOST" id="P0ADS2"/>
<dbReference type="PaxDb" id="511145-b2910"/>
<dbReference type="EnsemblBacteria" id="AAC75948">
    <property type="protein sequence ID" value="AAC75948"/>
    <property type="gene ID" value="b2910"/>
</dbReference>
<dbReference type="GeneID" id="93779091"/>
<dbReference type="GeneID" id="947404"/>
<dbReference type="KEGG" id="ecj:JW2878"/>
<dbReference type="KEGG" id="eco:b2910"/>
<dbReference type="KEGG" id="ecoc:C3026_15950"/>
<dbReference type="PATRIC" id="fig|1411691.4.peg.3822"/>
<dbReference type="EchoBASE" id="EB2716"/>
<dbReference type="eggNOG" id="COG3027">
    <property type="taxonomic scope" value="Bacteria"/>
</dbReference>
<dbReference type="HOGENOM" id="CLU_116623_3_0_6"/>
<dbReference type="InParanoid" id="P0ADS2"/>
<dbReference type="OMA" id="NICYELH"/>
<dbReference type="OrthoDB" id="5917174at2"/>
<dbReference type="PhylomeDB" id="P0ADS2"/>
<dbReference type="BioCyc" id="EcoCyc:EG12878-MONOMER"/>
<dbReference type="EvolutionaryTrace" id="P0ADS2"/>
<dbReference type="PRO" id="PR:P0ADS2"/>
<dbReference type="Proteomes" id="UP000000625">
    <property type="component" value="Chromosome"/>
</dbReference>
<dbReference type="GO" id="GO:0032153">
    <property type="term" value="C:cell division site"/>
    <property type="evidence" value="ECO:0000314"/>
    <property type="project" value="EcoliWiki"/>
</dbReference>
<dbReference type="GO" id="GO:0030428">
    <property type="term" value="C:cell septum"/>
    <property type="evidence" value="ECO:0000315"/>
    <property type="project" value="EcoliWiki"/>
</dbReference>
<dbReference type="GO" id="GO:0005829">
    <property type="term" value="C:cytosol"/>
    <property type="evidence" value="ECO:0000314"/>
    <property type="project" value="EcoCyc"/>
</dbReference>
<dbReference type="GO" id="GO:0005886">
    <property type="term" value="C:plasma membrane"/>
    <property type="evidence" value="ECO:0007669"/>
    <property type="project" value="UniProtKB-UniRule"/>
</dbReference>
<dbReference type="GO" id="GO:0042802">
    <property type="term" value="F:identical protein binding"/>
    <property type="evidence" value="ECO:0000314"/>
    <property type="project" value="EcoCyc"/>
</dbReference>
<dbReference type="GO" id="GO:0051301">
    <property type="term" value="P:cell division"/>
    <property type="evidence" value="ECO:0000315"/>
    <property type="project" value="EcoCyc"/>
</dbReference>
<dbReference type="GO" id="GO:0000917">
    <property type="term" value="P:division septum assembly"/>
    <property type="evidence" value="ECO:0000315"/>
    <property type="project" value="EcoliWiki"/>
</dbReference>
<dbReference type="GO" id="GO:0043093">
    <property type="term" value="P:FtsZ-dependent cytokinesis"/>
    <property type="evidence" value="ECO:0000315"/>
    <property type="project" value="EcoCyc"/>
</dbReference>
<dbReference type="GO" id="GO:0000921">
    <property type="term" value="P:septin ring assembly"/>
    <property type="evidence" value="ECO:0000314"/>
    <property type="project" value="EcoliWiki"/>
</dbReference>
<dbReference type="FunFam" id="1.20.5.50:FF:000001">
    <property type="entry name" value="Cell division protein ZapA"/>
    <property type="match status" value="1"/>
</dbReference>
<dbReference type="FunFam" id="3.30.160.880:FF:000001">
    <property type="entry name" value="Cell division protein ZapA"/>
    <property type="match status" value="1"/>
</dbReference>
<dbReference type="Gene3D" id="1.20.5.50">
    <property type="match status" value="1"/>
</dbReference>
<dbReference type="Gene3D" id="3.30.160.880">
    <property type="entry name" value="Cell division protein ZapA protomer, N-terminal domain"/>
    <property type="match status" value="1"/>
</dbReference>
<dbReference type="HAMAP" id="MF_02012">
    <property type="entry name" value="ZapA_type1"/>
    <property type="match status" value="1"/>
</dbReference>
<dbReference type="InterPro" id="IPR007838">
    <property type="entry name" value="Cell_div_ZapA-like"/>
</dbReference>
<dbReference type="InterPro" id="IPR036192">
    <property type="entry name" value="Cell_div_ZapA-like_sf"/>
</dbReference>
<dbReference type="InterPro" id="IPR023771">
    <property type="entry name" value="Cell_div_ZapA_eubact"/>
</dbReference>
<dbReference type="InterPro" id="IPR042233">
    <property type="entry name" value="Cell_div_ZapA_N"/>
</dbReference>
<dbReference type="NCBIfam" id="NF008209">
    <property type="entry name" value="PRK10972.1"/>
    <property type="match status" value="1"/>
</dbReference>
<dbReference type="PANTHER" id="PTHR34981">
    <property type="entry name" value="CELL DIVISION PROTEIN ZAPA"/>
    <property type="match status" value="1"/>
</dbReference>
<dbReference type="PANTHER" id="PTHR34981:SF1">
    <property type="entry name" value="CELL DIVISION PROTEIN ZAPA"/>
    <property type="match status" value="1"/>
</dbReference>
<dbReference type="Pfam" id="PF05164">
    <property type="entry name" value="ZapA"/>
    <property type="match status" value="1"/>
</dbReference>
<dbReference type="SUPFAM" id="SSF102829">
    <property type="entry name" value="Cell division protein ZapA-like"/>
    <property type="match status" value="1"/>
</dbReference>
<protein>
    <recommendedName>
        <fullName>Cell division protein ZapA</fullName>
    </recommendedName>
    <alternativeName>
        <fullName>Z ring-associated protein ZapA</fullName>
    </alternativeName>
</protein>
<evidence type="ECO:0000255" key="1"/>
<evidence type="ECO:0000269" key="2">
    <source>
    </source>
</evidence>
<evidence type="ECO:0000269" key="3">
    <source>
    </source>
</evidence>
<evidence type="ECO:0000269" key="4">
    <source>
    </source>
</evidence>
<evidence type="ECO:0000269" key="5">
    <source>
    </source>
</evidence>
<evidence type="ECO:0000305" key="6"/>
<evidence type="ECO:0007829" key="7">
    <source>
        <dbReference type="PDB" id="4P1M"/>
    </source>
</evidence>
<organism>
    <name type="scientific">Escherichia coli (strain K12)</name>
    <dbReference type="NCBI Taxonomy" id="83333"/>
    <lineage>
        <taxon>Bacteria</taxon>
        <taxon>Pseudomonadati</taxon>
        <taxon>Pseudomonadota</taxon>
        <taxon>Gammaproteobacteria</taxon>
        <taxon>Enterobacterales</taxon>
        <taxon>Enterobacteriaceae</taxon>
        <taxon>Escherichia</taxon>
    </lineage>
</organism>
<name>ZAPA_ECOLI</name>
<proteinExistence type="evidence at protein level"/>
<keyword id="KW-0002">3D-structure</keyword>
<keyword id="KW-0131">Cell cycle</keyword>
<keyword id="KW-0132">Cell division</keyword>
<keyword id="KW-0175">Coiled coil</keyword>
<keyword id="KW-0963">Cytoplasm</keyword>
<keyword id="KW-1185">Reference proteome</keyword>
<keyword id="KW-0717">Septation</keyword>